<name>ASSY_SHELP</name>
<comment type="catalytic activity">
    <reaction evidence="1">
        <text>L-citrulline + L-aspartate + ATP = 2-(N(omega)-L-arginino)succinate + AMP + diphosphate + H(+)</text>
        <dbReference type="Rhea" id="RHEA:10932"/>
        <dbReference type="ChEBI" id="CHEBI:15378"/>
        <dbReference type="ChEBI" id="CHEBI:29991"/>
        <dbReference type="ChEBI" id="CHEBI:30616"/>
        <dbReference type="ChEBI" id="CHEBI:33019"/>
        <dbReference type="ChEBI" id="CHEBI:57472"/>
        <dbReference type="ChEBI" id="CHEBI:57743"/>
        <dbReference type="ChEBI" id="CHEBI:456215"/>
        <dbReference type="EC" id="6.3.4.5"/>
    </reaction>
</comment>
<comment type="pathway">
    <text evidence="1">Amino-acid biosynthesis; L-arginine biosynthesis; L-arginine from L-ornithine and carbamoyl phosphate: step 2/3.</text>
</comment>
<comment type="subunit">
    <text evidence="1">Homotetramer.</text>
</comment>
<comment type="subcellular location">
    <subcellularLocation>
        <location evidence="1">Cytoplasm</location>
    </subcellularLocation>
</comment>
<comment type="similarity">
    <text evidence="1">Belongs to the argininosuccinate synthase family. Type 1 subfamily.</text>
</comment>
<evidence type="ECO:0000255" key="1">
    <source>
        <dbReference type="HAMAP-Rule" id="MF_00005"/>
    </source>
</evidence>
<accession>A3Q9C9</accession>
<gene>
    <name evidence="1" type="primary">argG</name>
    <name type="ordered locus">Shew_0205</name>
</gene>
<keyword id="KW-0028">Amino-acid biosynthesis</keyword>
<keyword id="KW-0055">Arginine biosynthesis</keyword>
<keyword id="KW-0067">ATP-binding</keyword>
<keyword id="KW-0963">Cytoplasm</keyword>
<keyword id="KW-0436">Ligase</keyword>
<keyword id="KW-0547">Nucleotide-binding</keyword>
<keyword id="KW-1185">Reference proteome</keyword>
<feature type="chain" id="PRO_1000000433" description="Argininosuccinate synthase">
    <location>
        <begin position="1"/>
        <end position="407"/>
    </location>
</feature>
<feature type="binding site" evidence="1">
    <location>
        <begin position="16"/>
        <end position="24"/>
    </location>
    <ligand>
        <name>ATP</name>
        <dbReference type="ChEBI" id="CHEBI:30616"/>
    </ligand>
</feature>
<feature type="binding site" evidence="1">
    <location>
        <position position="44"/>
    </location>
    <ligand>
        <name>ATP</name>
        <dbReference type="ChEBI" id="CHEBI:30616"/>
    </ligand>
</feature>
<feature type="binding site" evidence="1">
    <location>
        <position position="96"/>
    </location>
    <ligand>
        <name>L-citrulline</name>
        <dbReference type="ChEBI" id="CHEBI:57743"/>
    </ligand>
</feature>
<feature type="binding site" evidence="1">
    <location>
        <position position="101"/>
    </location>
    <ligand>
        <name>L-citrulline</name>
        <dbReference type="ChEBI" id="CHEBI:57743"/>
    </ligand>
</feature>
<feature type="binding site" evidence="1">
    <location>
        <position position="126"/>
    </location>
    <ligand>
        <name>ATP</name>
        <dbReference type="ChEBI" id="CHEBI:30616"/>
    </ligand>
</feature>
<feature type="binding site" evidence="1">
    <location>
        <position position="128"/>
    </location>
    <ligand>
        <name>L-aspartate</name>
        <dbReference type="ChEBI" id="CHEBI:29991"/>
    </ligand>
</feature>
<feature type="binding site" evidence="1">
    <location>
        <position position="132"/>
    </location>
    <ligand>
        <name>L-aspartate</name>
        <dbReference type="ChEBI" id="CHEBI:29991"/>
    </ligand>
</feature>
<feature type="binding site" evidence="1">
    <location>
        <position position="132"/>
    </location>
    <ligand>
        <name>L-citrulline</name>
        <dbReference type="ChEBI" id="CHEBI:57743"/>
    </ligand>
</feature>
<feature type="binding site" evidence="1">
    <location>
        <position position="133"/>
    </location>
    <ligand>
        <name>L-aspartate</name>
        <dbReference type="ChEBI" id="CHEBI:29991"/>
    </ligand>
</feature>
<feature type="binding site" evidence="1">
    <location>
        <position position="136"/>
    </location>
    <ligand>
        <name>L-citrulline</name>
        <dbReference type="ChEBI" id="CHEBI:57743"/>
    </ligand>
</feature>
<feature type="binding site" evidence="1">
    <location>
        <position position="185"/>
    </location>
    <ligand>
        <name>L-citrulline</name>
        <dbReference type="ChEBI" id="CHEBI:57743"/>
    </ligand>
</feature>
<feature type="binding site" evidence="1">
    <location>
        <position position="194"/>
    </location>
    <ligand>
        <name>L-citrulline</name>
        <dbReference type="ChEBI" id="CHEBI:57743"/>
    </ligand>
</feature>
<feature type="binding site" evidence="1">
    <location>
        <position position="270"/>
    </location>
    <ligand>
        <name>L-citrulline</name>
        <dbReference type="ChEBI" id="CHEBI:57743"/>
    </ligand>
</feature>
<feature type="binding site" evidence="1">
    <location>
        <position position="282"/>
    </location>
    <ligand>
        <name>L-citrulline</name>
        <dbReference type="ChEBI" id="CHEBI:57743"/>
    </ligand>
</feature>
<sequence>MSIENNKASVKKVVLAYSGGLDTSAIIPWLKETYDNCEIVAFCADVGQGEAELEGLHEKAIASGASECYIVDLKEELVADYIYPTIATGAIYEGTYLLGTSMARPIIAKAQVEVARKVGADAVCHGCTGKGNDQVRFEGCFAALAPDLTVIAPWREWSMVSREDLLDYLAERNIKTTASATKIYSRDANAWHISHEGGELEDPWNEPSKEVWTMTVAPEDAPDEPEYVSVEMEAGRITKVNGQSYTPYGALMALNEIAGAHGVGRIDITENRLVGMKSRGCYETPGGTVMFAALRAIEELVLDKTSREWREQVGAKMAHLVYDGRWFTPLCESLLGASQPLANLLNGEVVLKLYKGQAQAVKKRSPNSLYSEEFATFGEDEVYNQKDAEGFIRLYSLASRIRALNVK</sequence>
<dbReference type="EC" id="6.3.4.5" evidence="1"/>
<dbReference type="EMBL" id="CP000606">
    <property type="protein sequence ID" value="ABO22077.1"/>
    <property type="molecule type" value="Genomic_DNA"/>
</dbReference>
<dbReference type="RefSeq" id="WP_011864012.1">
    <property type="nucleotide sequence ID" value="NC_009092.1"/>
</dbReference>
<dbReference type="SMR" id="A3Q9C9"/>
<dbReference type="STRING" id="323850.Shew_0205"/>
<dbReference type="KEGG" id="slo:Shew_0205"/>
<dbReference type="eggNOG" id="COG0137">
    <property type="taxonomic scope" value="Bacteria"/>
</dbReference>
<dbReference type="HOGENOM" id="CLU_032784_4_2_6"/>
<dbReference type="OrthoDB" id="9801641at2"/>
<dbReference type="UniPathway" id="UPA00068">
    <property type="reaction ID" value="UER00113"/>
</dbReference>
<dbReference type="Proteomes" id="UP000001558">
    <property type="component" value="Chromosome"/>
</dbReference>
<dbReference type="GO" id="GO:0005737">
    <property type="term" value="C:cytoplasm"/>
    <property type="evidence" value="ECO:0007669"/>
    <property type="project" value="UniProtKB-SubCell"/>
</dbReference>
<dbReference type="GO" id="GO:0004055">
    <property type="term" value="F:argininosuccinate synthase activity"/>
    <property type="evidence" value="ECO:0007669"/>
    <property type="project" value="UniProtKB-UniRule"/>
</dbReference>
<dbReference type="GO" id="GO:0005524">
    <property type="term" value="F:ATP binding"/>
    <property type="evidence" value="ECO:0007669"/>
    <property type="project" value="UniProtKB-UniRule"/>
</dbReference>
<dbReference type="GO" id="GO:0000053">
    <property type="term" value="P:argininosuccinate metabolic process"/>
    <property type="evidence" value="ECO:0007669"/>
    <property type="project" value="TreeGrafter"/>
</dbReference>
<dbReference type="GO" id="GO:0006526">
    <property type="term" value="P:L-arginine biosynthetic process"/>
    <property type="evidence" value="ECO:0007669"/>
    <property type="project" value="UniProtKB-UniRule"/>
</dbReference>
<dbReference type="GO" id="GO:0000050">
    <property type="term" value="P:urea cycle"/>
    <property type="evidence" value="ECO:0007669"/>
    <property type="project" value="TreeGrafter"/>
</dbReference>
<dbReference type="CDD" id="cd01999">
    <property type="entry name" value="ASS"/>
    <property type="match status" value="1"/>
</dbReference>
<dbReference type="FunFam" id="3.40.50.620:FF:000019">
    <property type="entry name" value="Argininosuccinate synthase"/>
    <property type="match status" value="1"/>
</dbReference>
<dbReference type="FunFam" id="3.90.1260.10:FF:000007">
    <property type="entry name" value="Argininosuccinate synthase"/>
    <property type="match status" value="1"/>
</dbReference>
<dbReference type="Gene3D" id="3.90.1260.10">
    <property type="entry name" value="Argininosuccinate synthetase, chain A, domain 2"/>
    <property type="match status" value="1"/>
</dbReference>
<dbReference type="Gene3D" id="3.40.50.620">
    <property type="entry name" value="HUPs"/>
    <property type="match status" value="1"/>
</dbReference>
<dbReference type="Gene3D" id="1.20.5.470">
    <property type="entry name" value="Single helix bin"/>
    <property type="match status" value="1"/>
</dbReference>
<dbReference type="HAMAP" id="MF_00005">
    <property type="entry name" value="Arg_succ_synth_type1"/>
    <property type="match status" value="1"/>
</dbReference>
<dbReference type="InterPro" id="IPR048268">
    <property type="entry name" value="Arginosuc_syn_C"/>
</dbReference>
<dbReference type="InterPro" id="IPR048267">
    <property type="entry name" value="Arginosuc_syn_N"/>
</dbReference>
<dbReference type="InterPro" id="IPR001518">
    <property type="entry name" value="Arginosuc_synth"/>
</dbReference>
<dbReference type="InterPro" id="IPR018223">
    <property type="entry name" value="Arginosuc_synth_CS"/>
</dbReference>
<dbReference type="InterPro" id="IPR023434">
    <property type="entry name" value="Arginosuc_synth_type_1_subfam"/>
</dbReference>
<dbReference type="InterPro" id="IPR024074">
    <property type="entry name" value="AS_cat/multimer_dom_body"/>
</dbReference>
<dbReference type="InterPro" id="IPR014729">
    <property type="entry name" value="Rossmann-like_a/b/a_fold"/>
</dbReference>
<dbReference type="NCBIfam" id="TIGR00032">
    <property type="entry name" value="argG"/>
    <property type="match status" value="1"/>
</dbReference>
<dbReference type="NCBIfam" id="NF001770">
    <property type="entry name" value="PRK00509.1"/>
    <property type="match status" value="1"/>
</dbReference>
<dbReference type="PANTHER" id="PTHR11587">
    <property type="entry name" value="ARGININOSUCCINATE SYNTHASE"/>
    <property type="match status" value="1"/>
</dbReference>
<dbReference type="PANTHER" id="PTHR11587:SF2">
    <property type="entry name" value="ARGININOSUCCINATE SYNTHASE"/>
    <property type="match status" value="1"/>
</dbReference>
<dbReference type="Pfam" id="PF20979">
    <property type="entry name" value="Arginosuc_syn_C"/>
    <property type="match status" value="1"/>
</dbReference>
<dbReference type="Pfam" id="PF00764">
    <property type="entry name" value="Arginosuc_synth"/>
    <property type="match status" value="1"/>
</dbReference>
<dbReference type="SUPFAM" id="SSF52402">
    <property type="entry name" value="Adenine nucleotide alpha hydrolases-like"/>
    <property type="match status" value="1"/>
</dbReference>
<dbReference type="SUPFAM" id="SSF69864">
    <property type="entry name" value="Argininosuccinate synthetase, C-terminal domain"/>
    <property type="match status" value="1"/>
</dbReference>
<dbReference type="PROSITE" id="PS00564">
    <property type="entry name" value="ARGININOSUCCIN_SYN_1"/>
    <property type="match status" value="1"/>
</dbReference>
<dbReference type="PROSITE" id="PS00565">
    <property type="entry name" value="ARGININOSUCCIN_SYN_2"/>
    <property type="match status" value="1"/>
</dbReference>
<organism>
    <name type="scientific">Shewanella loihica (strain ATCC BAA-1088 / PV-4)</name>
    <dbReference type="NCBI Taxonomy" id="323850"/>
    <lineage>
        <taxon>Bacteria</taxon>
        <taxon>Pseudomonadati</taxon>
        <taxon>Pseudomonadota</taxon>
        <taxon>Gammaproteobacteria</taxon>
        <taxon>Alteromonadales</taxon>
        <taxon>Shewanellaceae</taxon>
        <taxon>Shewanella</taxon>
    </lineage>
</organism>
<proteinExistence type="inferred from homology"/>
<reference key="1">
    <citation type="submission" date="2007-03" db="EMBL/GenBank/DDBJ databases">
        <title>Complete sequence of Shewanella loihica PV-4.</title>
        <authorList>
            <consortium name="US DOE Joint Genome Institute"/>
            <person name="Copeland A."/>
            <person name="Lucas S."/>
            <person name="Lapidus A."/>
            <person name="Barry K."/>
            <person name="Detter J.C."/>
            <person name="Glavina del Rio T."/>
            <person name="Hammon N."/>
            <person name="Israni S."/>
            <person name="Dalin E."/>
            <person name="Tice H."/>
            <person name="Pitluck S."/>
            <person name="Chain P."/>
            <person name="Malfatti S."/>
            <person name="Shin M."/>
            <person name="Vergez L."/>
            <person name="Schmutz J."/>
            <person name="Larimer F."/>
            <person name="Land M."/>
            <person name="Hauser L."/>
            <person name="Kyrpides N."/>
            <person name="Mikhailova N."/>
            <person name="Romine M.F."/>
            <person name="Serres G."/>
            <person name="Fredrickson J."/>
            <person name="Tiedje J."/>
            <person name="Richardson P."/>
        </authorList>
    </citation>
    <scope>NUCLEOTIDE SEQUENCE [LARGE SCALE GENOMIC DNA]</scope>
    <source>
        <strain>ATCC BAA-1088 / PV-4</strain>
    </source>
</reference>
<protein>
    <recommendedName>
        <fullName evidence="1">Argininosuccinate synthase</fullName>
        <ecNumber evidence="1">6.3.4.5</ecNumber>
    </recommendedName>
    <alternativeName>
        <fullName evidence="1">Citrulline--aspartate ligase</fullName>
    </alternativeName>
</protein>